<gene>
    <name evidence="6" type="primary">IP5P1</name>
    <name evidence="9" type="synonym">5P1</name>
    <name evidence="12" type="ordered locus">At1g34120</name>
    <name evidence="13" type="ORF">F12G12.6</name>
</gene>
<reference key="1">
    <citation type="journal article" date="2001" name="Plant Cell">
        <title>Arabidopsis PLC1 is required for secondary responses to abscisic acid signals.</title>
        <authorList>
            <person name="Sanchez J.-P."/>
            <person name="Chua N.-H."/>
        </authorList>
    </citation>
    <scope>NUCLEOTIDE SEQUENCE [MRNA] (ISOFORM 2)</scope>
    <source>
        <strain>cv. Landsberg erecta</strain>
    </source>
</reference>
<reference key="2">
    <citation type="submission" date="1998-12" db="EMBL/GenBank/DDBJ databases">
        <title>Characterization of putative inositol (1,4,5)-trisphosphate/phosphatidylinositol (4,5)-bisphosphate 5-phosphatase cDNAs from Arabidopsis thaliana.</title>
        <authorList>
            <person name="Parzer M.S.A."/>
            <person name="de Vos S."/>
            <person name="van Lookeren Campagne M.M."/>
        </authorList>
    </citation>
    <scope>NUCLEOTIDE SEQUENCE [MRNA] (ISOFORM 1)</scope>
    <source>
        <strain>cv. Columbia</strain>
    </source>
</reference>
<reference key="3">
    <citation type="journal article" date="2000" name="Nature">
        <title>Sequence and analysis of chromosome 1 of the plant Arabidopsis thaliana.</title>
        <authorList>
            <person name="Theologis A."/>
            <person name="Ecker J.R."/>
            <person name="Palm C.J."/>
            <person name="Federspiel N.A."/>
            <person name="Kaul S."/>
            <person name="White O."/>
            <person name="Alonso J."/>
            <person name="Altafi H."/>
            <person name="Araujo R."/>
            <person name="Bowman C.L."/>
            <person name="Brooks S.Y."/>
            <person name="Buehler E."/>
            <person name="Chan A."/>
            <person name="Chao Q."/>
            <person name="Chen H."/>
            <person name="Cheuk R.F."/>
            <person name="Chin C.W."/>
            <person name="Chung M.K."/>
            <person name="Conn L."/>
            <person name="Conway A.B."/>
            <person name="Conway A.R."/>
            <person name="Creasy T.H."/>
            <person name="Dewar K."/>
            <person name="Dunn P."/>
            <person name="Etgu P."/>
            <person name="Feldblyum T.V."/>
            <person name="Feng J.-D."/>
            <person name="Fong B."/>
            <person name="Fujii C.Y."/>
            <person name="Gill J.E."/>
            <person name="Goldsmith A.D."/>
            <person name="Haas B."/>
            <person name="Hansen N.F."/>
            <person name="Hughes B."/>
            <person name="Huizar L."/>
            <person name="Hunter J.L."/>
            <person name="Jenkins J."/>
            <person name="Johnson-Hopson C."/>
            <person name="Khan S."/>
            <person name="Khaykin E."/>
            <person name="Kim C.J."/>
            <person name="Koo H.L."/>
            <person name="Kremenetskaia I."/>
            <person name="Kurtz D.B."/>
            <person name="Kwan A."/>
            <person name="Lam B."/>
            <person name="Langin-Hooper S."/>
            <person name="Lee A."/>
            <person name="Lee J.M."/>
            <person name="Lenz C.A."/>
            <person name="Li J.H."/>
            <person name="Li Y.-P."/>
            <person name="Lin X."/>
            <person name="Liu S.X."/>
            <person name="Liu Z.A."/>
            <person name="Luros J.S."/>
            <person name="Maiti R."/>
            <person name="Marziali A."/>
            <person name="Militscher J."/>
            <person name="Miranda M."/>
            <person name="Nguyen M."/>
            <person name="Nierman W.C."/>
            <person name="Osborne B.I."/>
            <person name="Pai G."/>
            <person name="Peterson J."/>
            <person name="Pham P.K."/>
            <person name="Rizzo M."/>
            <person name="Rooney T."/>
            <person name="Rowley D."/>
            <person name="Sakano H."/>
            <person name="Salzberg S.L."/>
            <person name="Schwartz J.R."/>
            <person name="Shinn P."/>
            <person name="Southwick A.M."/>
            <person name="Sun H."/>
            <person name="Tallon L.J."/>
            <person name="Tambunga G."/>
            <person name="Toriumi M.J."/>
            <person name="Town C.D."/>
            <person name="Utterback T."/>
            <person name="Van Aken S."/>
            <person name="Vaysberg M."/>
            <person name="Vysotskaia V.S."/>
            <person name="Walker M."/>
            <person name="Wu D."/>
            <person name="Yu G."/>
            <person name="Fraser C.M."/>
            <person name="Venter J.C."/>
            <person name="Davis R.W."/>
        </authorList>
    </citation>
    <scope>NUCLEOTIDE SEQUENCE [LARGE SCALE GENOMIC DNA]</scope>
    <source>
        <strain>cv. Columbia</strain>
    </source>
</reference>
<reference key="4">
    <citation type="journal article" date="2017" name="Plant J.">
        <title>Araport11: a complete reannotation of the Arabidopsis thaliana reference genome.</title>
        <authorList>
            <person name="Cheng C.Y."/>
            <person name="Krishnakumar V."/>
            <person name="Chan A.P."/>
            <person name="Thibaud-Nissen F."/>
            <person name="Schobel S."/>
            <person name="Town C.D."/>
        </authorList>
    </citation>
    <scope>GENOME REANNOTATION</scope>
    <source>
        <strain>cv. Columbia</strain>
    </source>
</reference>
<reference key="5">
    <citation type="journal article" date="2003" name="Science">
        <title>Empirical analysis of transcriptional activity in the Arabidopsis genome.</title>
        <authorList>
            <person name="Yamada K."/>
            <person name="Lim J."/>
            <person name="Dale J.M."/>
            <person name="Chen H."/>
            <person name="Shinn P."/>
            <person name="Palm C.J."/>
            <person name="Southwick A.M."/>
            <person name="Wu H.C."/>
            <person name="Kim C.J."/>
            <person name="Nguyen M."/>
            <person name="Pham P.K."/>
            <person name="Cheuk R.F."/>
            <person name="Karlin-Newmann G."/>
            <person name="Liu S.X."/>
            <person name="Lam B."/>
            <person name="Sakano H."/>
            <person name="Wu T."/>
            <person name="Yu G."/>
            <person name="Miranda M."/>
            <person name="Quach H.L."/>
            <person name="Tripp M."/>
            <person name="Chang C.H."/>
            <person name="Lee J.M."/>
            <person name="Toriumi M.J."/>
            <person name="Chan M.M."/>
            <person name="Tang C.C."/>
            <person name="Onodera C.S."/>
            <person name="Deng J.M."/>
            <person name="Akiyama K."/>
            <person name="Ansari Y."/>
            <person name="Arakawa T."/>
            <person name="Banh J."/>
            <person name="Banno F."/>
            <person name="Bowser L."/>
            <person name="Brooks S.Y."/>
            <person name="Carninci P."/>
            <person name="Chao Q."/>
            <person name="Choy N."/>
            <person name="Enju A."/>
            <person name="Goldsmith A.D."/>
            <person name="Gurjal M."/>
            <person name="Hansen N.F."/>
            <person name="Hayashizaki Y."/>
            <person name="Johnson-Hopson C."/>
            <person name="Hsuan V.W."/>
            <person name="Iida K."/>
            <person name="Karnes M."/>
            <person name="Khan S."/>
            <person name="Koesema E."/>
            <person name="Ishida J."/>
            <person name="Jiang P.X."/>
            <person name="Jones T."/>
            <person name="Kawai J."/>
            <person name="Kamiya A."/>
            <person name="Meyers C."/>
            <person name="Nakajima M."/>
            <person name="Narusaka M."/>
            <person name="Seki M."/>
            <person name="Sakurai T."/>
            <person name="Satou M."/>
            <person name="Tamse R."/>
            <person name="Vaysberg M."/>
            <person name="Wallender E.K."/>
            <person name="Wong C."/>
            <person name="Yamamura Y."/>
            <person name="Yuan S."/>
            <person name="Shinozaki K."/>
            <person name="Davis R.W."/>
            <person name="Theologis A."/>
            <person name="Ecker J.R."/>
        </authorList>
    </citation>
    <scope>NUCLEOTIDE SEQUENCE [LARGE SCALE MRNA] (ISOFORM 2)</scope>
    <source>
        <strain>cv. Columbia</strain>
    </source>
</reference>
<reference key="6">
    <citation type="submission" date="2006-07" db="EMBL/GenBank/DDBJ databases">
        <title>Large-scale analysis of RIKEN Arabidopsis full-length (RAFL) cDNAs.</title>
        <authorList>
            <person name="Totoki Y."/>
            <person name="Seki M."/>
            <person name="Ishida J."/>
            <person name="Nakajima M."/>
            <person name="Enju A."/>
            <person name="Kamiya A."/>
            <person name="Narusaka M."/>
            <person name="Shin-i T."/>
            <person name="Nakagawa M."/>
            <person name="Sakamoto N."/>
            <person name="Oishi K."/>
            <person name="Kohara Y."/>
            <person name="Kobayashi M."/>
            <person name="Toyoda A."/>
            <person name="Sakaki Y."/>
            <person name="Sakurai T."/>
            <person name="Iida K."/>
            <person name="Akiyama K."/>
            <person name="Satou M."/>
            <person name="Toyoda T."/>
            <person name="Konagaya A."/>
            <person name="Carninci P."/>
            <person name="Kawai J."/>
            <person name="Hayashizaki Y."/>
            <person name="Shinozaki K."/>
        </authorList>
    </citation>
    <scope>NUCLEOTIDE SEQUENCE [LARGE SCALE MRNA] (ISOFORM 2)</scope>
    <source>
        <strain>cv. Columbia</strain>
    </source>
</reference>
<reference key="7">
    <citation type="journal article" date="2001" name="Plant Physiol.">
        <title>Molecular characterization of At5PTase1, an inositol phosphatase capable of terminating inositol trisphosphate signaling.</title>
        <authorList>
            <person name="Berdy S.E."/>
            <person name="Kudla J."/>
            <person name="Gruissem W."/>
            <person name="Gillaspy G.E."/>
        </authorList>
    </citation>
    <scope>GENE FAMILY</scope>
    <scope>FUNCTION</scope>
    <scope>CATALYTIC ACTIVITY</scope>
    <scope>TISSUE SPECIFICITY</scope>
</reference>
<reference key="8">
    <citation type="journal article" date="2003" name="Plant Physiol.">
        <title>An Arabidopsis inositol 5-phosphatase gain-of-function alters abscisic acid signaling.</title>
        <authorList>
            <person name="Burnette R.N."/>
            <person name="Gunesekera B.M."/>
            <person name="Gillaspy G.E."/>
        </authorList>
    </citation>
    <scope>FUNCTION</scope>
    <scope>INDUCTION</scope>
</reference>
<reference key="9">
    <citation type="journal article" date="2007" name="Plant Physiol.">
        <title>Inositol polyphosphate 5-phosphatases 1 and 2 are required for regulating seedling growth.</title>
        <authorList>
            <person name="Gunesekera B."/>
            <person name="Torabinejad J."/>
            <person name="Robinson J."/>
            <person name="Gillaspy G.E."/>
        </authorList>
    </citation>
    <scope>DISRUPTION PHENOTYPE</scope>
    <scope>TISSUE SPECIFICITY</scope>
</reference>
<reference key="10">
    <citation type="journal article" date="2009" name="J. Proteomics">
        <title>Phosphoproteomic analysis of nuclei-enriched fractions from Arabidopsis thaliana.</title>
        <authorList>
            <person name="Jones A.M.E."/>
            <person name="MacLean D."/>
            <person name="Studholme D.J."/>
            <person name="Serna-Sanz A."/>
            <person name="Andreasson E."/>
            <person name="Rathjen J.P."/>
            <person name="Peck S.C."/>
        </authorList>
    </citation>
    <scope>PHOSPHORYLATION [LARGE SCALE ANALYSIS] AT SER-60</scope>
    <scope>IDENTIFICATION BY MASS SPECTROMETRY [LARGE SCALE ANALYSIS]</scope>
    <source>
        <strain>cv. Columbia</strain>
    </source>
</reference>
<reference key="11">
    <citation type="journal article" date="2009" name="Plant Physiol.">
        <title>Large-scale Arabidopsis phosphoproteome profiling reveals novel chloroplast kinase substrates and phosphorylation networks.</title>
        <authorList>
            <person name="Reiland S."/>
            <person name="Messerli G."/>
            <person name="Baerenfaller K."/>
            <person name="Gerrits B."/>
            <person name="Endler A."/>
            <person name="Grossmann J."/>
            <person name="Gruissem W."/>
            <person name="Baginsky S."/>
        </authorList>
    </citation>
    <scope>PHOSPHORYLATION [LARGE SCALE ANALYSIS] AT SER-60</scope>
    <scope>IDENTIFICATION BY MASS SPECTROMETRY [LARGE SCALE ANALYSIS]</scope>
</reference>
<reference key="12">
    <citation type="journal article" date="2013" name="Mol. Plant">
        <title>Inositol polyphosphate phosphatidylinositol 5-phosphatase9 (At5ptase9) controls plant salt tolerance by regulating endocytosis.</title>
        <authorList>
            <person name="Golani Y."/>
            <person name="Kaye Y."/>
            <person name="Gilhar O."/>
            <person name="Ercetin M."/>
            <person name="Gillaspy G."/>
            <person name="Levine A."/>
        </authorList>
    </citation>
    <scope>DISRUPTION PHENOTYPE</scope>
    <scope>FUNCTION</scope>
</reference>
<accession>Q84MA2</accession>
<accession>Q0WU22</accession>
<accession>Q9FUR3</accession>
<accession>Q9FX20</accession>
<accession>Q9ZSC4</accession>
<name>IP5P1_ARATH</name>
<comment type="function">
    <text evidence="2 3 5">Has phosphatase activity toward Ins(1,4,5)P3 and Ins(1,3,4,5)P4, but not toward Ins(1,4)P2, Ins(1)P (PubMed:11402208). Seems to be involved in the abscisic acid (ABA) signaling pathway (PubMed:12805629). Could also be able to hydrolyze PtdIns(4,5)P2 and PtdIns(3,4,5)P3 (PubMed:23658066).</text>
</comment>
<comment type="catalytic activity">
    <reaction evidence="2">
        <text>1D-myo-inositol 1,4,5-trisphosphate + H2O = 1D-myo-inositol 1,4-bisphosphate + phosphate</text>
        <dbReference type="Rhea" id="RHEA:19797"/>
        <dbReference type="ChEBI" id="CHEBI:15377"/>
        <dbReference type="ChEBI" id="CHEBI:43474"/>
        <dbReference type="ChEBI" id="CHEBI:58282"/>
        <dbReference type="ChEBI" id="CHEBI:203600"/>
        <dbReference type="EC" id="3.1.3.56"/>
    </reaction>
</comment>
<comment type="catalytic activity">
    <reaction evidence="2">
        <text>1D-myo-inositol 1,3,4,5-tetrakisphosphate + H2O = 1D-myo-inositol 1,3,4-trisphosphate + phosphate</text>
        <dbReference type="Rhea" id="RHEA:11392"/>
        <dbReference type="ChEBI" id="CHEBI:15377"/>
        <dbReference type="ChEBI" id="CHEBI:43474"/>
        <dbReference type="ChEBI" id="CHEBI:57895"/>
        <dbReference type="ChEBI" id="CHEBI:58414"/>
        <dbReference type="EC" id="3.1.3.56"/>
    </reaction>
</comment>
<comment type="alternative products">
    <event type="alternative splicing"/>
    <isoform>
        <id>Q84MA2-1</id>
        <name>1</name>
        <sequence type="displayed"/>
    </isoform>
    <isoform>
        <id>Q84MA2-2</id>
        <name>2</name>
        <sequence type="described" ref="VSP_013848"/>
    </isoform>
    <text>Additional isoforms seem to exist.</text>
</comment>
<comment type="tissue specificity">
    <text evidence="2 4">Expressed ubiquitously.</text>
</comment>
<comment type="induction">
    <text evidence="3">Induced by ABA at both transcript and protein levels in a specific, transient manner.</text>
</comment>
<comment type="disruption phenotype">
    <text evidence="4 5">No visible phenotype. Slightly reduced production of reactive oxygen species (ROS) (PubMed:23658066). Alterations in germination and in early seedling growth. Enhanced sensibility to abscisic acid (ABA) with elevated levels of Ins(1,4,5)P3 (PubMed:17237190).</text>
</comment>
<comment type="miscellaneous">
    <molecule>Isoform 2</molecule>
    <text evidence="11">May be due to a donor acceptor splice site.</text>
</comment>
<comment type="similarity">
    <text evidence="11">Belongs to the inositol polyphosphate 5-phosphatase family.</text>
</comment>
<sequence length="590" mass="67783">MAEVRSRSRRTESNWATICCSAFSCLQLYWARIVLRKWFNVSASESDYSADSDDDYEDRSQEFDPISSGVTNPRVDTDGNVIYRPKLRRRNSETFRMQYIDTKAIRICAGTWNVGGRVPSSDLDIDGWLDTLEPADIYVLGLQEIVPLNAGNIFGMEDDQPALEWENLIRDALNRVQPRKLKIKSHSDPPSPSKFKQPEEVPYSVEDMFVETSHDACDGISSMDNKLNSVESTDVPIVSEDSLTNIDVLGSTNDNASCLPIQEYLQRQFSTPNTPDRSLSMQINSDSKREERFSYTERVGLSWPEPPLRLLNQYVSERRGSFKSVNLTITNLRKPSYVRIVSKQMVGVFLTIWVRRNLRKHISNLCVSTVGVGIMGYIGNKGSVSVSMSIYQTPFCFLCTHLSSGEKDTDQEKRNDDVREIHRRTQFLPHSLNANELPRSICNHERIIWLGDLNYRINLSYEKTHELIARKEWQRLVEYDQLSREMTKGNLFEGWSEGTLDFAPTYKYEIDSENYIGDDPESGKRRPAWCDRIIWNGKGMKLFNYRRNEIKLSDHRPVTATFLAEVEVLSPRKLQHALTLTYAEIQGLDA</sequence>
<organism>
    <name type="scientific">Arabidopsis thaliana</name>
    <name type="common">Mouse-ear cress</name>
    <dbReference type="NCBI Taxonomy" id="3702"/>
    <lineage>
        <taxon>Eukaryota</taxon>
        <taxon>Viridiplantae</taxon>
        <taxon>Streptophyta</taxon>
        <taxon>Embryophyta</taxon>
        <taxon>Tracheophyta</taxon>
        <taxon>Spermatophyta</taxon>
        <taxon>Magnoliopsida</taxon>
        <taxon>eudicotyledons</taxon>
        <taxon>Gunneridae</taxon>
        <taxon>Pentapetalae</taxon>
        <taxon>rosids</taxon>
        <taxon>malvids</taxon>
        <taxon>Brassicales</taxon>
        <taxon>Brassicaceae</taxon>
        <taxon>Camelineae</taxon>
        <taxon>Arabidopsis</taxon>
    </lineage>
</organism>
<proteinExistence type="evidence at protein level"/>
<feature type="chain" id="PRO_0000209722" description="Type I inositol polyphosphate 5-phosphatase 1">
    <location>
        <begin position="1"/>
        <end position="590"/>
    </location>
</feature>
<feature type="region of interest" description="Disordered" evidence="1">
    <location>
        <begin position="47"/>
        <end position="73"/>
    </location>
</feature>
<feature type="region of interest" description="Catalytic 1" evidence="7">
    <location>
        <begin position="445"/>
        <end position="460"/>
    </location>
</feature>
<feature type="region of interest" description="Catalytic 2" evidence="7">
    <location>
        <begin position="523"/>
        <end position="538"/>
    </location>
</feature>
<feature type="compositionally biased region" description="Acidic residues" evidence="1">
    <location>
        <begin position="48"/>
        <end position="57"/>
    </location>
</feature>
<feature type="modified residue" description="Phosphoserine" evidence="14 15">
    <location>
        <position position="60"/>
    </location>
</feature>
<feature type="splice variant" id="VSP_013848" description="In isoform 2." evidence="6 8 10">
    <original>GNVIY</original>
    <variation>D</variation>
    <location>
        <begin position="79"/>
        <end position="83"/>
    </location>
</feature>
<feature type="sequence conflict" description="In Ref. 1; AAG17824." evidence="11" ref="1">
    <original>S</original>
    <variation>L</variation>
    <location>
        <position position="21"/>
    </location>
</feature>
<feature type="sequence conflict" description="In Ref. 2; AAD10828." evidence="11" ref="2">
    <original>N</original>
    <variation>D</variation>
    <location>
        <position position="80"/>
    </location>
</feature>
<feature type="sequence conflict" description="In Ref. 2; AAD10828." evidence="11" ref="2">
    <original>S</original>
    <variation>G</variation>
    <location>
        <position position="239"/>
    </location>
</feature>
<feature type="sequence conflict" description="In Ref. 2; AAD10828." evidence="11" ref="2">
    <original>E</original>
    <variation>K</variation>
    <location>
        <position position="478"/>
    </location>
</feature>
<protein>
    <recommendedName>
        <fullName evidence="7">Type I inositol polyphosphate 5-phosphatase 1</fullName>
        <shortName evidence="7">At5PTase1</shortName>
        <ecNumber evidence="2">3.1.3.56</ecNumber>
    </recommendedName>
</protein>
<evidence type="ECO:0000256" key="1">
    <source>
        <dbReference type="SAM" id="MobiDB-lite"/>
    </source>
</evidence>
<evidence type="ECO:0000269" key="2">
    <source>
    </source>
</evidence>
<evidence type="ECO:0000269" key="3">
    <source>
    </source>
</evidence>
<evidence type="ECO:0000269" key="4">
    <source>
    </source>
</evidence>
<evidence type="ECO:0000269" key="5">
    <source>
    </source>
</evidence>
<evidence type="ECO:0000303" key="6">
    <source>
    </source>
</evidence>
<evidence type="ECO:0000303" key="7">
    <source>
    </source>
</evidence>
<evidence type="ECO:0000303" key="8">
    <source>
    </source>
</evidence>
<evidence type="ECO:0000303" key="9">
    <source ref="2"/>
</evidence>
<evidence type="ECO:0000303" key="10">
    <source ref="6"/>
</evidence>
<evidence type="ECO:0000305" key="11"/>
<evidence type="ECO:0000312" key="12">
    <source>
        <dbReference type="Araport" id="AT1G34120"/>
    </source>
</evidence>
<evidence type="ECO:0000312" key="13">
    <source>
        <dbReference type="EMBL" id="AAG12525.1"/>
    </source>
</evidence>
<evidence type="ECO:0007744" key="14">
    <source>
    </source>
</evidence>
<evidence type="ECO:0007744" key="15">
    <source>
    </source>
</evidence>
<dbReference type="EC" id="3.1.3.56" evidence="2"/>
<dbReference type="EMBL" id="AF289633">
    <property type="protein sequence ID" value="AAG17824.1"/>
    <property type="molecule type" value="mRNA"/>
</dbReference>
<dbReference type="EMBL" id="AF117062">
    <property type="protein sequence ID" value="AAD10828.1"/>
    <property type="molecule type" value="mRNA"/>
</dbReference>
<dbReference type="EMBL" id="AC015446">
    <property type="protein sequence ID" value="AAG12525.1"/>
    <property type="molecule type" value="Genomic_DNA"/>
</dbReference>
<dbReference type="EMBL" id="CP002684">
    <property type="protein sequence ID" value="AEE31672.1"/>
    <property type="molecule type" value="Genomic_DNA"/>
</dbReference>
<dbReference type="EMBL" id="CP002684">
    <property type="protein sequence ID" value="AEE31674.1"/>
    <property type="molecule type" value="Genomic_DNA"/>
</dbReference>
<dbReference type="EMBL" id="BT006448">
    <property type="protein sequence ID" value="AAP21256.1"/>
    <property type="molecule type" value="mRNA"/>
</dbReference>
<dbReference type="EMBL" id="AK227368">
    <property type="protein sequence ID" value="BAE99376.1"/>
    <property type="molecule type" value="mRNA"/>
</dbReference>
<dbReference type="PIR" id="C86465">
    <property type="entry name" value="C86465"/>
</dbReference>
<dbReference type="RefSeq" id="NP_564437.1">
    <molecule id="Q84MA2-2"/>
    <property type="nucleotide sequence ID" value="NM_103135.4"/>
</dbReference>
<dbReference type="RefSeq" id="NP_849745.1">
    <molecule id="Q84MA2-1"/>
    <property type="nucleotide sequence ID" value="NM_179414.1"/>
</dbReference>
<dbReference type="SMR" id="Q84MA2"/>
<dbReference type="FunCoup" id="Q84MA2">
    <property type="interactions" value="3022"/>
</dbReference>
<dbReference type="STRING" id="3702.Q84MA2"/>
<dbReference type="iPTMnet" id="Q84MA2"/>
<dbReference type="PaxDb" id="3702-AT1G34120.2"/>
<dbReference type="EnsemblPlants" id="AT1G34120.1">
    <molecule id="Q84MA2-2"/>
    <property type="protein sequence ID" value="AT1G34120.1"/>
    <property type="gene ID" value="AT1G34120"/>
</dbReference>
<dbReference type="EnsemblPlants" id="AT1G34120.2">
    <molecule id="Q84MA2-1"/>
    <property type="protein sequence ID" value="AT1G34120.2"/>
    <property type="gene ID" value="AT1G34120"/>
</dbReference>
<dbReference type="GeneID" id="840311"/>
<dbReference type="Gramene" id="AT1G34120.1">
    <molecule id="Q84MA2-2"/>
    <property type="protein sequence ID" value="AT1G34120.1"/>
    <property type="gene ID" value="AT1G34120"/>
</dbReference>
<dbReference type="Gramene" id="AT1G34120.2">
    <molecule id="Q84MA2-1"/>
    <property type="protein sequence ID" value="AT1G34120.2"/>
    <property type="gene ID" value="AT1G34120"/>
</dbReference>
<dbReference type="KEGG" id="ath:AT1G34120"/>
<dbReference type="Araport" id="AT1G34120"/>
<dbReference type="TAIR" id="AT1G34120">
    <property type="gene designation" value="IP5PI"/>
</dbReference>
<dbReference type="eggNOG" id="KOG0565">
    <property type="taxonomic scope" value="Eukaryota"/>
</dbReference>
<dbReference type="InParanoid" id="Q84MA2"/>
<dbReference type="OMA" id="PVHQKML"/>
<dbReference type="PhylomeDB" id="Q84MA2"/>
<dbReference type="BioCyc" id="ARA:AT1G34120-MONOMER"/>
<dbReference type="BioCyc" id="MetaCyc:AT1G34120-MONOMER"/>
<dbReference type="BRENDA" id="3.1.3.56">
    <property type="organism ID" value="399"/>
</dbReference>
<dbReference type="PRO" id="PR:Q84MA2"/>
<dbReference type="Proteomes" id="UP000006548">
    <property type="component" value="Chromosome 1"/>
</dbReference>
<dbReference type="ExpressionAtlas" id="Q84MA2">
    <property type="expression patterns" value="baseline and differential"/>
</dbReference>
<dbReference type="GO" id="GO:0046030">
    <property type="term" value="F:inositol trisphosphate phosphatase activity"/>
    <property type="evidence" value="ECO:0000314"/>
    <property type="project" value="TAIR"/>
</dbReference>
<dbReference type="GO" id="GO:0052659">
    <property type="term" value="F:inositol-1,3,4,5-tetrakisphosphate 5-phosphatase activity"/>
    <property type="evidence" value="ECO:0007669"/>
    <property type="project" value="RHEA"/>
</dbReference>
<dbReference type="GO" id="GO:0052658">
    <property type="term" value="F:inositol-1,4,5-trisphosphate 5-phosphatase activity"/>
    <property type="evidence" value="ECO:0007669"/>
    <property type="project" value="RHEA"/>
</dbReference>
<dbReference type="GO" id="GO:0004445">
    <property type="term" value="F:inositol-polyphosphate 5-phosphatase activity"/>
    <property type="evidence" value="ECO:0000314"/>
    <property type="project" value="TAIR"/>
</dbReference>
<dbReference type="GO" id="GO:0034485">
    <property type="term" value="F:phosphatidylinositol-3,4,5-trisphosphate 5-phosphatase activity"/>
    <property type="evidence" value="ECO:0000314"/>
    <property type="project" value="UniProtKB"/>
</dbReference>
<dbReference type="GO" id="GO:0004439">
    <property type="term" value="F:phosphatidylinositol-4,5-bisphosphate 5-phosphatase activity"/>
    <property type="evidence" value="ECO:0000314"/>
    <property type="project" value="UniProtKB"/>
</dbReference>
<dbReference type="GO" id="GO:0009738">
    <property type="term" value="P:abscisic acid-activated signaling pathway"/>
    <property type="evidence" value="ECO:0007669"/>
    <property type="project" value="UniProtKB-KW"/>
</dbReference>
<dbReference type="GO" id="GO:0032957">
    <property type="term" value="P:inositol trisphosphate metabolic process"/>
    <property type="evidence" value="ECO:0000314"/>
    <property type="project" value="TAIR"/>
</dbReference>
<dbReference type="GO" id="GO:0046856">
    <property type="term" value="P:phosphatidylinositol dephosphorylation"/>
    <property type="evidence" value="ECO:0000314"/>
    <property type="project" value="UniProtKB"/>
</dbReference>
<dbReference type="GO" id="GO:0009845">
    <property type="term" value="P:seed germination"/>
    <property type="evidence" value="ECO:0000315"/>
    <property type="project" value="UniProtKB"/>
</dbReference>
<dbReference type="GO" id="GO:0090351">
    <property type="term" value="P:seedling development"/>
    <property type="evidence" value="ECO:0000315"/>
    <property type="project" value="UniProtKB"/>
</dbReference>
<dbReference type="FunFam" id="3.60.10.10:FF:000014">
    <property type="entry name" value="Type I inositol polyphosphate 5-phosphatase 1"/>
    <property type="match status" value="1"/>
</dbReference>
<dbReference type="FunFam" id="3.60.10.10:FF:000038">
    <property type="entry name" value="type IV inositol polyphosphate 5-phosphatase 3"/>
    <property type="match status" value="1"/>
</dbReference>
<dbReference type="Gene3D" id="3.60.10.10">
    <property type="entry name" value="Endonuclease/exonuclease/phosphatase"/>
    <property type="match status" value="2"/>
</dbReference>
<dbReference type="InterPro" id="IPR036691">
    <property type="entry name" value="Endo/exonu/phosph_ase_sf"/>
</dbReference>
<dbReference type="InterPro" id="IPR045849">
    <property type="entry name" value="IP5P_plant"/>
</dbReference>
<dbReference type="InterPro" id="IPR000300">
    <property type="entry name" value="IPPc"/>
</dbReference>
<dbReference type="PANTHER" id="PTHR45666:SF30">
    <property type="entry name" value="TYPE I INOSITOL POLYPHOSPHATE 5-PHOSPHATASE 1"/>
    <property type="match status" value="1"/>
</dbReference>
<dbReference type="PANTHER" id="PTHR45666">
    <property type="entry name" value="TYPE IV INOSITOL POLYPHOSPHATE 5-PHOSPHATASE 9"/>
    <property type="match status" value="1"/>
</dbReference>
<dbReference type="Pfam" id="PF22669">
    <property type="entry name" value="Exo_endo_phos2"/>
    <property type="match status" value="2"/>
</dbReference>
<dbReference type="SMART" id="SM00128">
    <property type="entry name" value="IPPc"/>
    <property type="match status" value="1"/>
</dbReference>
<dbReference type="SUPFAM" id="SSF56219">
    <property type="entry name" value="DNase I-like"/>
    <property type="match status" value="1"/>
</dbReference>
<keyword id="KW-0938">Abscisic acid signaling pathway</keyword>
<keyword id="KW-0025">Alternative splicing</keyword>
<keyword id="KW-0378">Hydrolase</keyword>
<keyword id="KW-0597">Phosphoprotein</keyword>
<keyword id="KW-1185">Reference proteome</keyword>